<accession>Q9ULJ1</accession>
<accession>A8MU56</accession>
<accession>B4E037</accession>
<accession>Q05C40</accession>
<accession>Q5BJG5</accession>
<accession>Q5TBX3</accession>
<accession>Q5TBX4</accession>
<accession>Q86X31</accession>
<evidence type="ECO:0000255" key="1"/>
<evidence type="ECO:0000269" key="2">
    <source>
    </source>
</evidence>
<evidence type="ECO:0000269" key="3">
    <source>
    </source>
</evidence>
<evidence type="ECO:0000269" key="4">
    <source>
    </source>
</evidence>
<evidence type="ECO:0000303" key="5">
    <source>
    </source>
</evidence>
<evidence type="ECO:0000303" key="6">
    <source>
    </source>
</evidence>
<evidence type="ECO:0000303" key="7">
    <source>
    </source>
</evidence>
<evidence type="ECO:0000303" key="8">
    <source ref="3"/>
</evidence>
<evidence type="ECO:0000305" key="9"/>
<evidence type="ECO:0000312" key="10">
    <source>
        <dbReference type="HGNC" id="HGNC:29225"/>
    </source>
</evidence>
<feature type="chain" id="PRO_0000308909" description="Protein BCAP">
    <location>
        <begin position="1"/>
        <end position="636"/>
    </location>
</feature>
<feature type="coiled-coil region" evidence="1">
    <location>
        <begin position="36"/>
        <end position="97"/>
    </location>
</feature>
<feature type="coiled-coil region" evidence="1">
    <location>
        <begin position="141"/>
        <end position="220"/>
    </location>
</feature>
<feature type="coiled-coil region" evidence="1">
    <location>
        <begin position="249"/>
        <end position="325"/>
    </location>
</feature>
<feature type="coiled-coil region" evidence="1">
    <location>
        <begin position="377"/>
        <end position="484"/>
    </location>
</feature>
<feature type="coiled-coil region" evidence="1">
    <location>
        <begin position="519"/>
        <end position="631"/>
    </location>
</feature>
<feature type="splice variant" id="VSP_040930" description="In isoform 5." evidence="5">
    <location>
        <begin position="1"/>
        <end position="131"/>
    </location>
</feature>
<feature type="splice variant" id="VSP_029057" description="In isoform 3, isoform 4, isoform 5 and isoform 6." evidence="5 6 8">
    <location>
        <begin position="353"/>
        <end position="381"/>
    </location>
</feature>
<feature type="splice variant" id="VSP_029058" description="In isoform 2 and isoform 6." evidence="5 6">
    <location>
        <begin position="454"/>
        <end position="506"/>
    </location>
</feature>
<feature type="splice variant" id="VSP_029059" description="In isoform 3." evidence="6">
    <original>Q</original>
    <variation>QILKQWEEYSVLAW</variation>
    <location>
        <position position="506"/>
    </location>
</feature>
<feature type="splice variant" id="VSP_029060" description="In isoform 2, isoform 4, isoform 5 and isoform 6." evidence="5 6 8">
    <original>DPETP</original>
    <variation>KAQHQEVCLKEVQNSLEKSENQNESIKNYLQFLKTSYVTMFE</variation>
    <location>
        <begin position="632"/>
        <end position="636"/>
    </location>
</feature>
<feature type="sequence variant" id="VAR_036882" description="In dbSNP:rs12032435.">
    <original>R</original>
    <variation>H</variation>
    <location>
        <position position="177"/>
    </location>
</feature>
<feature type="sequence variant" id="VAR_036883" description="In dbSNP:rs17854440." evidence="2">
    <original>K</original>
    <variation>R</variation>
    <location>
        <position position="350"/>
    </location>
</feature>
<feature type="sequence conflict" description="In Ref. 6; AAH47368." evidence="9" ref="6">
    <original>E</original>
    <variation>G</variation>
    <location>
        <position position="135"/>
    </location>
</feature>
<feature type="sequence conflict" description="In Ref. 6; AAH29420." evidence="9" ref="6">
    <original>L</original>
    <variation>S</variation>
    <location>
        <position position="203"/>
    </location>
</feature>
<feature type="sequence conflict" description="In Ref. 1; BAA86543." evidence="9" ref="1">
    <original>Y</original>
    <variation>H</variation>
    <location>
        <position position="339"/>
    </location>
</feature>
<organism>
    <name type="scientific">Homo sapiens</name>
    <name type="common">Human</name>
    <dbReference type="NCBI Taxonomy" id="9606"/>
    <lineage>
        <taxon>Eukaryota</taxon>
        <taxon>Metazoa</taxon>
        <taxon>Chordata</taxon>
        <taxon>Craniata</taxon>
        <taxon>Vertebrata</taxon>
        <taxon>Euteleostomi</taxon>
        <taxon>Mammalia</taxon>
        <taxon>Eutheria</taxon>
        <taxon>Euarchontoglires</taxon>
        <taxon>Primates</taxon>
        <taxon>Haplorrhini</taxon>
        <taxon>Catarrhini</taxon>
        <taxon>Hominidae</taxon>
        <taxon>Homo</taxon>
    </lineage>
</organism>
<dbReference type="EMBL" id="AB033055">
    <property type="protein sequence ID" value="BAA86543.1"/>
    <property type="status" value="ALT_INIT"/>
    <property type="molecule type" value="mRNA"/>
</dbReference>
<dbReference type="EMBL" id="AK303209">
    <property type="protein sequence ID" value="BAG64299.1"/>
    <property type="molecule type" value="mRNA"/>
</dbReference>
<dbReference type="EMBL" id="AK308351">
    <property type="status" value="NOT_ANNOTATED_CDS"/>
    <property type="molecule type" value="mRNA"/>
</dbReference>
<dbReference type="EMBL" id="CR591511">
    <property type="status" value="NOT_ANNOTATED_CDS"/>
    <property type="molecule type" value="mRNA"/>
</dbReference>
<dbReference type="EMBL" id="AC119749">
    <property type="status" value="NOT_ANNOTATED_CDS"/>
    <property type="molecule type" value="Genomic_DNA"/>
</dbReference>
<dbReference type="EMBL" id="AL136382">
    <property type="status" value="NOT_ANNOTATED_CDS"/>
    <property type="molecule type" value="Genomic_DNA"/>
</dbReference>
<dbReference type="EMBL" id="CH471097">
    <property type="protein sequence ID" value="EAW73190.1"/>
    <property type="molecule type" value="Genomic_DNA"/>
</dbReference>
<dbReference type="EMBL" id="CH471097">
    <property type="protein sequence ID" value="EAW73192.1"/>
    <property type="molecule type" value="Genomic_DNA"/>
</dbReference>
<dbReference type="EMBL" id="BC029420">
    <property type="protein sequence ID" value="AAH29420.1"/>
    <property type="status" value="ALT_SEQ"/>
    <property type="molecule type" value="mRNA"/>
</dbReference>
<dbReference type="EMBL" id="BC047368">
    <property type="protein sequence ID" value="AAH47368.1"/>
    <property type="status" value="ALT_SEQ"/>
    <property type="molecule type" value="mRNA"/>
</dbReference>
<dbReference type="EMBL" id="BC091490">
    <property type="protein sequence ID" value="AAH91490.1"/>
    <property type="molecule type" value="mRNA"/>
</dbReference>
<dbReference type="CCDS" id="CCDS30763.2">
    <molecule id="Q9ULJ1-3"/>
</dbReference>
<dbReference type="CCDS" id="CCDS41354.2">
    <molecule id="Q9ULJ1-1"/>
</dbReference>
<dbReference type="CCDS" id="CCDS53339.1">
    <molecule id="Q9ULJ1-6"/>
</dbReference>
<dbReference type="CCDS" id="CCDS90997.1">
    <molecule id="Q9ULJ1-4"/>
</dbReference>
<dbReference type="RefSeq" id="NP_001007023.2">
    <molecule id="Q9ULJ1-1"/>
    <property type="nucleotide sequence ID" value="NM_001007022.4"/>
</dbReference>
<dbReference type="RefSeq" id="NP_001171694.1">
    <molecule id="Q9ULJ1-2"/>
    <property type="nucleotide sequence ID" value="NM_001184765.2"/>
</dbReference>
<dbReference type="RefSeq" id="NP_001171695.1">
    <molecule id="Q9ULJ1-6"/>
    <property type="nucleotide sequence ID" value="NM_001184766.2"/>
</dbReference>
<dbReference type="RefSeq" id="NP_001353708.1">
    <molecule id="Q9ULJ1-5"/>
    <property type="nucleotide sequence ID" value="NM_001366779.1"/>
</dbReference>
<dbReference type="RefSeq" id="NP_001353710.1">
    <molecule id="Q9ULJ1-4"/>
    <property type="nucleotide sequence ID" value="NM_001366781.1"/>
</dbReference>
<dbReference type="RefSeq" id="NP_001353711.1">
    <molecule id="Q9ULJ1-5"/>
    <property type="nucleotide sequence ID" value="NM_001366782.1"/>
</dbReference>
<dbReference type="RefSeq" id="NP_001353713.1">
    <molecule id="Q9ULJ1-4"/>
    <property type="nucleotide sequence ID" value="NM_001366784.1"/>
</dbReference>
<dbReference type="RefSeq" id="NP_001382450.1">
    <molecule id="Q9ULJ1-6"/>
    <property type="nucleotide sequence ID" value="NM_001395521.1"/>
</dbReference>
<dbReference type="RefSeq" id="NP_001382454.1">
    <molecule id="Q9ULJ1-5"/>
    <property type="nucleotide sequence ID" value="NM_001395525.1"/>
</dbReference>
<dbReference type="RefSeq" id="NP_001382455.1">
    <molecule id="Q9ULJ1-5"/>
    <property type="nucleotide sequence ID" value="NM_001395526.1"/>
</dbReference>
<dbReference type="RefSeq" id="NP_001382456.1">
    <molecule id="Q9ULJ1-5"/>
    <property type="nucleotide sequence ID" value="NM_001395527.1"/>
</dbReference>
<dbReference type="RefSeq" id="NP_001382457.1">
    <molecule id="Q9ULJ1-5"/>
    <property type="nucleotide sequence ID" value="NM_001395528.1"/>
</dbReference>
<dbReference type="RefSeq" id="NP_065780.2">
    <molecule id="Q9ULJ1-3"/>
    <property type="nucleotide sequence ID" value="NM_020729.4"/>
</dbReference>
<dbReference type="RefSeq" id="XP_005271111.1">
    <property type="nucleotide sequence ID" value="XM_005271054.3"/>
</dbReference>
<dbReference type="RefSeq" id="XP_011540121.1">
    <property type="nucleotide sequence ID" value="XM_011541819.2"/>
</dbReference>
<dbReference type="RefSeq" id="XP_016857366.1">
    <property type="nucleotide sequence ID" value="XM_017001877.1"/>
</dbReference>
<dbReference type="SMR" id="Q9ULJ1"/>
<dbReference type="BioGRID" id="121557">
    <property type="interactions" value="41"/>
</dbReference>
<dbReference type="FunCoup" id="Q9ULJ1">
    <property type="interactions" value="336"/>
</dbReference>
<dbReference type="IntAct" id="Q9ULJ1">
    <property type="interactions" value="47"/>
</dbReference>
<dbReference type="MINT" id="Q9ULJ1"/>
<dbReference type="STRING" id="9606.ENSP00000359600"/>
<dbReference type="iPTMnet" id="Q9ULJ1"/>
<dbReference type="PhosphoSitePlus" id="Q9ULJ1"/>
<dbReference type="BioMuta" id="ODF2L"/>
<dbReference type="DMDM" id="160013283"/>
<dbReference type="jPOST" id="Q9ULJ1"/>
<dbReference type="MassIVE" id="Q9ULJ1"/>
<dbReference type="PaxDb" id="9606-ENSP00000359600"/>
<dbReference type="PeptideAtlas" id="Q9ULJ1"/>
<dbReference type="ProteomicsDB" id="85040">
    <molecule id="Q9ULJ1-1"/>
</dbReference>
<dbReference type="ProteomicsDB" id="85041">
    <molecule id="Q9ULJ1-2"/>
</dbReference>
<dbReference type="ProteomicsDB" id="85042">
    <molecule id="Q9ULJ1-3"/>
</dbReference>
<dbReference type="ProteomicsDB" id="85043">
    <molecule id="Q9ULJ1-4"/>
</dbReference>
<dbReference type="ProteomicsDB" id="85044">
    <molecule id="Q9ULJ1-5"/>
</dbReference>
<dbReference type="ProteomicsDB" id="85045">
    <molecule id="Q9ULJ1-6"/>
</dbReference>
<dbReference type="Pumba" id="Q9ULJ1"/>
<dbReference type="Antibodypedia" id="33581">
    <property type="antibodies" value="113 antibodies from 24 providers"/>
</dbReference>
<dbReference type="DNASU" id="57489"/>
<dbReference type="Ensembl" id="ENST00000294678.6">
    <molecule id="Q9ULJ1-3"/>
    <property type="protein sequence ID" value="ENSP00000294678.2"/>
    <property type="gene ID" value="ENSG00000122417.16"/>
</dbReference>
<dbReference type="Ensembl" id="ENST00000317336.11">
    <molecule id="Q9ULJ1-1"/>
    <property type="protein sequence ID" value="ENSP00000320165.8"/>
    <property type="gene ID" value="ENSG00000122417.16"/>
</dbReference>
<dbReference type="Ensembl" id="ENST00000359242.7">
    <molecule id="Q9ULJ1-1"/>
    <property type="protein sequence ID" value="ENSP00000359600.2"/>
    <property type="gene ID" value="ENSG00000122417.16"/>
</dbReference>
<dbReference type="Ensembl" id="ENST00000370566.7">
    <molecule id="Q9ULJ1-6"/>
    <property type="protein sequence ID" value="ENSP00000359597.2"/>
    <property type="gene ID" value="ENSG00000122417.16"/>
</dbReference>
<dbReference type="Ensembl" id="ENST00000460698.7">
    <molecule id="Q9ULJ1-4"/>
    <property type="protein sequence ID" value="ENSP00000433092.2"/>
    <property type="gene ID" value="ENSG00000122417.16"/>
</dbReference>
<dbReference type="Ensembl" id="ENST00000696303.1">
    <molecule id="Q9ULJ1-4"/>
    <property type="protein sequence ID" value="ENSP00000512541.1"/>
    <property type="gene ID" value="ENSG00000122417.16"/>
</dbReference>
<dbReference type="GeneID" id="57489"/>
<dbReference type="KEGG" id="hsa:57489"/>
<dbReference type="MANE-Select" id="ENST00000460698.7">
    <molecule id="Q9ULJ1-4"/>
    <property type="protein sequence ID" value="ENSP00000433092.2"/>
    <property type="RefSeq nucleotide sequence ID" value="NM_001366781.1"/>
    <property type="RefSeq protein sequence ID" value="NP_001353710.1"/>
</dbReference>
<dbReference type="UCSC" id="uc001dll.3">
    <molecule id="Q9ULJ1-1"/>
    <property type="organism name" value="human"/>
</dbReference>
<dbReference type="AGR" id="HGNC:29225"/>
<dbReference type="CTD" id="57489"/>
<dbReference type="DisGeNET" id="57489"/>
<dbReference type="GeneCards" id="ODF2L"/>
<dbReference type="HGNC" id="HGNC:29225">
    <property type="gene designation" value="ODF2L"/>
</dbReference>
<dbReference type="HPA" id="ENSG00000122417">
    <property type="expression patterns" value="Low tissue specificity"/>
</dbReference>
<dbReference type="MIM" id="620130">
    <property type="type" value="gene"/>
</dbReference>
<dbReference type="neXtProt" id="NX_Q9ULJ1"/>
<dbReference type="OpenTargets" id="ENSG00000122417"/>
<dbReference type="PharmGKB" id="PA142671232"/>
<dbReference type="VEuPathDB" id="HostDB:ENSG00000122417"/>
<dbReference type="eggNOG" id="ENOG502R83P">
    <property type="taxonomic scope" value="Eukaryota"/>
</dbReference>
<dbReference type="GeneTree" id="ENSGT00530000063497"/>
<dbReference type="InParanoid" id="Q9ULJ1"/>
<dbReference type="OMA" id="YKHQMLA"/>
<dbReference type="OrthoDB" id="9948429at2759"/>
<dbReference type="PAN-GO" id="Q9ULJ1">
    <property type="GO annotations" value="3 GO annotations based on evolutionary models"/>
</dbReference>
<dbReference type="PhylomeDB" id="Q9ULJ1"/>
<dbReference type="TreeFam" id="TF328605"/>
<dbReference type="PathwayCommons" id="Q9ULJ1"/>
<dbReference type="SignaLink" id="Q9ULJ1"/>
<dbReference type="BioGRID-ORCS" id="57489">
    <property type="hits" value="16 hits in 1154 CRISPR screens"/>
</dbReference>
<dbReference type="CD-CODE" id="8C2F96ED">
    <property type="entry name" value="Centrosome"/>
</dbReference>
<dbReference type="ChiTaRS" id="ODF2L">
    <property type="organism name" value="human"/>
</dbReference>
<dbReference type="GenomeRNAi" id="57489"/>
<dbReference type="Pharos" id="Q9ULJ1">
    <property type="development level" value="Tdark"/>
</dbReference>
<dbReference type="PRO" id="PR:Q9ULJ1"/>
<dbReference type="Proteomes" id="UP000005640">
    <property type="component" value="Chromosome 1"/>
</dbReference>
<dbReference type="RNAct" id="Q9ULJ1">
    <property type="molecule type" value="protein"/>
</dbReference>
<dbReference type="Bgee" id="ENSG00000122417">
    <property type="expression patterns" value="Expressed in right uterine tube and 170 other cell types or tissues"/>
</dbReference>
<dbReference type="ExpressionAtlas" id="Q9ULJ1">
    <property type="expression patterns" value="baseline and differential"/>
</dbReference>
<dbReference type="GO" id="GO:0034451">
    <property type="term" value="C:centriolar satellite"/>
    <property type="evidence" value="ECO:0000314"/>
    <property type="project" value="UniProtKB"/>
</dbReference>
<dbReference type="GO" id="GO:0005814">
    <property type="term" value="C:centriole"/>
    <property type="evidence" value="ECO:0007669"/>
    <property type="project" value="UniProtKB-SubCell"/>
</dbReference>
<dbReference type="GO" id="GO:0005813">
    <property type="term" value="C:centrosome"/>
    <property type="evidence" value="ECO:0000314"/>
    <property type="project" value="UniProtKB"/>
</dbReference>
<dbReference type="GO" id="GO:0036064">
    <property type="term" value="C:ciliary basal body"/>
    <property type="evidence" value="ECO:0000314"/>
    <property type="project" value="UniProtKB"/>
</dbReference>
<dbReference type="GO" id="GO:0005737">
    <property type="term" value="C:cytoplasm"/>
    <property type="evidence" value="ECO:0007669"/>
    <property type="project" value="UniProtKB-KW"/>
</dbReference>
<dbReference type="GO" id="GO:0030030">
    <property type="term" value="P:cell projection organization"/>
    <property type="evidence" value="ECO:0007669"/>
    <property type="project" value="UniProtKB-KW"/>
</dbReference>
<dbReference type="GO" id="GO:1902018">
    <property type="term" value="P:negative regulation of cilium assembly"/>
    <property type="evidence" value="ECO:0000314"/>
    <property type="project" value="UniProtKB"/>
</dbReference>
<dbReference type="InterPro" id="IPR026099">
    <property type="entry name" value="Odf2-rel"/>
</dbReference>
<dbReference type="PANTHER" id="PTHR23162">
    <property type="entry name" value="OUTER DENSE FIBER OF SPERM TAILS 2"/>
    <property type="match status" value="1"/>
</dbReference>
<dbReference type="PANTHER" id="PTHR23162:SF7">
    <property type="entry name" value="PROTEIN BCAP"/>
    <property type="match status" value="1"/>
</dbReference>
<comment type="function">
    <text evidence="4">Acts as a suppressor of ciliogenesis, specifically, the initiation of ciliogenesis.</text>
</comment>
<comment type="subcellular location">
    <subcellularLocation>
        <location evidence="3">Cytoplasm</location>
        <location evidence="3">Cytoskeleton</location>
        <location evidence="3">Microtubule organizing center</location>
        <location evidence="3">Centrosome</location>
    </subcellularLocation>
    <subcellularLocation>
        <location evidence="3">Cytoplasm</location>
        <location evidence="3">Cytoskeleton</location>
        <location evidence="3">Microtubule organizing center</location>
        <location evidence="3">Centrosome</location>
        <location evidence="3">Centriole</location>
    </subcellularLocation>
    <subcellularLocation>
        <location evidence="4">Cytoplasm</location>
        <location evidence="4">Cytoskeleton</location>
        <location evidence="4">Microtubule organizing center</location>
        <location evidence="4">Centrosome</location>
        <location evidence="4">Centriolar satellite</location>
    </subcellularLocation>
    <subcellularLocation>
        <location evidence="3">Cytoplasm</location>
        <location evidence="3">Cytoskeleton</location>
        <location evidence="3">Cilium basal body</location>
    </subcellularLocation>
    <text evidence="3 4">Localizes to centrioles in proliferative cells and basal bodies in ciliated cells (PubMed:17485331). Disappears during ciliogenesis but reappears, albeit at a lower levels once ciliogenesis has completed (PubMed:28775150).</text>
</comment>
<comment type="subcellular location">
    <molecule>Isoform 1</molecule>
    <subcellularLocation>
        <location evidence="4">Cytoplasm</location>
        <location evidence="4">Cytoskeleton</location>
        <location evidence="4">Microtubule organizing center</location>
        <location evidence="4">Centrosome</location>
        <location evidence="4">Centriolar satellite</location>
    </subcellularLocation>
    <text evidence="4">Not present in the centrioles in cycling cells. Disappears during ciliogenesis.</text>
</comment>
<comment type="subcellular location">
    <molecule>Isoform 6</molecule>
    <subcellularLocation>
        <location evidence="4">Cytoplasm</location>
        <location evidence="4">Cytoskeleton</location>
        <location evidence="4">Microtubule organizing center</location>
        <location evidence="4">Centrosome</location>
        <location evidence="4">Centriolar satellite</location>
    </subcellularLocation>
    <subcellularLocation>
        <location evidence="4">Cytoplasm</location>
        <location evidence="4">Cytoskeleton</location>
        <location evidence="4">Microtubule organizing center</location>
        <location evidence="4">Centrosome</location>
        <location evidence="4">Centriole</location>
    </subcellularLocation>
    <text evidence="4">Disappears during ciliogenesis but reappears, albeit at a lower levels once ciliogenesis has completed.</text>
</comment>
<comment type="alternative products">
    <event type="alternative splicing"/>
    <isoform>
        <id>Q9ULJ1-1</id>
        <name>1</name>
        <name evidence="7">L-BCAP</name>
        <sequence type="displayed"/>
    </isoform>
    <isoform>
        <id>Q9ULJ1-2</id>
        <name>2</name>
        <sequence type="described" ref="VSP_029058 VSP_029060"/>
    </isoform>
    <isoform>
        <id>Q9ULJ1-3</id>
        <name>3</name>
        <sequence type="described" ref="VSP_029057 VSP_029059"/>
    </isoform>
    <isoform>
        <id>Q9ULJ1-4</id>
        <name>4</name>
        <sequence type="described" ref="VSP_029057 VSP_029060"/>
    </isoform>
    <isoform>
        <id>Q9ULJ1-5</id>
        <name>5</name>
        <sequence type="described" ref="VSP_040930 VSP_029057 VSP_029060"/>
    </isoform>
    <isoform>
        <id>Q9ULJ1-6</id>
        <name>6</name>
        <sequence type="described" ref="VSP_029057 VSP_029058 VSP_029060"/>
    </isoform>
</comment>
<comment type="tissue specificity">
    <text evidence="3">Mainly expressed in trachea and testis. Not detected in bone marrow, bladder, leukocytes. Only weakly detected in tongue, stomach, brain and ovaries.</text>
</comment>
<comment type="similarity">
    <text evidence="9">Belongs to the ODF2 family.</text>
</comment>
<comment type="sequence caution" evidence="9">
    <conflict type="miscellaneous discrepancy">
        <sequence resource="EMBL-CDS" id="AAH29420"/>
    </conflict>
    <text>Contaminating sequence. Potential poly-A sequence.</text>
</comment>
<comment type="sequence caution" evidence="9">
    <conflict type="erroneous termination">
        <sequence resource="EMBL-CDS" id="AAH47368"/>
    </conflict>
    <text>Truncated C-terminus.</text>
</comment>
<comment type="sequence caution" evidence="9">
    <conflict type="frameshift">
        <sequence resource="EMBL" id="AK308351"/>
    </conflict>
</comment>
<comment type="sequence caution" evidence="9">
    <conflict type="erroneous initiation">
        <sequence resource="EMBL-CDS" id="BAA86543"/>
    </conflict>
    <text>Extended N-terminus.</text>
</comment>
<protein>
    <recommendedName>
        <fullName evidence="9">Protein BCAP</fullName>
    </recommendedName>
    <alternativeName>
        <fullName evidence="7">Basal body centriole-associated protein</fullName>
    </alternativeName>
    <alternativeName>
        <fullName>Outer dense fiber protein 2-like</fullName>
        <shortName>ODF2-like protein</shortName>
    </alternativeName>
</protein>
<reference key="1">
    <citation type="journal article" date="1999" name="DNA Res.">
        <title>Prediction of the coding sequences of unidentified human genes. XV. The complete sequences of 100 new cDNA clones from brain which code for large proteins in vitro.</title>
        <authorList>
            <person name="Nagase T."/>
            <person name="Ishikawa K."/>
            <person name="Kikuno R."/>
            <person name="Hirosawa M."/>
            <person name="Nomura N."/>
            <person name="Ohara O."/>
        </authorList>
    </citation>
    <scope>NUCLEOTIDE SEQUENCE [LARGE SCALE MRNA] (ISOFORM 1)</scope>
    <source>
        <tissue>Brain</tissue>
    </source>
</reference>
<reference key="2">
    <citation type="journal article" date="2004" name="Nat. Genet.">
        <title>Complete sequencing and characterization of 21,243 full-length human cDNAs.</title>
        <authorList>
            <person name="Ota T."/>
            <person name="Suzuki Y."/>
            <person name="Nishikawa T."/>
            <person name="Otsuki T."/>
            <person name="Sugiyama T."/>
            <person name="Irie R."/>
            <person name="Wakamatsu A."/>
            <person name="Hayashi K."/>
            <person name="Sato H."/>
            <person name="Nagai K."/>
            <person name="Kimura K."/>
            <person name="Makita H."/>
            <person name="Sekine M."/>
            <person name="Obayashi M."/>
            <person name="Nishi T."/>
            <person name="Shibahara T."/>
            <person name="Tanaka T."/>
            <person name="Ishii S."/>
            <person name="Yamamoto J."/>
            <person name="Saito K."/>
            <person name="Kawai Y."/>
            <person name="Isono Y."/>
            <person name="Nakamura Y."/>
            <person name="Nagahari K."/>
            <person name="Murakami K."/>
            <person name="Yasuda T."/>
            <person name="Iwayanagi T."/>
            <person name="Wagatsuma M."/>
            <person name="Shiratori A."/>
            <person name="Sudo H."/>
            <person name="Hosoiri T."/>
            <person name="Kaku Y."/>
            <person name="Kodaira H."/>
            <person name="Kondo H."/>
            <person name="Sugawara M."/>
            <person name="Takahashi M."/>
            <person name="Kanda K."/>
            <person name="Yokoi T."/>
            <person name="Furuya T."/>
            <person name="Kikkawa E."/>
            <person name="Omura Y."/>
            <person name="Abe K."/>
            <person name="Kamihara K."/>
            <person name="Katsuta N."/>
            <person name="Sato K."/>
            <person name="Tanikawa M."/>
            <person name="Yamazaki M."/>
            <person name="Ninomiya K."/>
            <person name="Ishibashi T."/>
            <person name="Yamashita H."/>
            <person name="Murakawa K."/>
            <person name="Fujimori K."/>
            <person name="Tanai H."/>
            <person name="Kimata M."/>
            <person name="Watanabe M."/>
            <person name="Hiraoka S."/>
            <person name="Chiba Y."/>
            <person name="Ishida S."/>
            <person name="Ono Y."/>
            <person name="Takiguchi S."/>
            <person name="Watanabe S."/>
            <person name="Yosida M."/>
            <person name="Hotuta T."/>
            <person name="Kusano J."/>
            <person name="Kanehori K."/>
            <person name="Takahashi-Fujii A."/>
            <person name="Hara H."/>
            <person name="Tanase T.-O."/>
            <person name="Nomura Y."/>
            <person name="Togiya S."/>
            <person name="Komai F."/>
            <person name="Hara R."/>
            <person name="Takeuchi K."/>
            <person name="Arita M."/>
            <person name="Imose N."/>
            <person name="Musashino K."/>
            <person name="Yuuki H."/>
            <person name="Oshima A."/>
            <person name="Sasaki N."/>
            <person name="Aotsuka S."/>
            <person name="Yoshikawa Y."/>
            <person name="Matsunawa H."/>
            <person name="Ichihara T."/>
            <person name="Shiohata N."/>
            <person name="Sano S."/>
            <person name="Moriya S."/>
            <person name="Momiyama H."/>
            <person name="Satoh N."/>
            <person name="Takami S."/>
            <person name="Terashima Y."/>
            <person name="Suzuki O."/>
            <person name="Nakagawa S."/>
            <person name="Senoh A."/>
            <person name="Mizoguchi H."/>
            <person name="Goto Y."/>
            <person name="Shimizu F."/>
            <person name="Wakebe H."/>
            <person name="Hishigaki H."/>
            <person name="Watanabe T."/>
            <person name="Sugiyama A."/>
            <person name="Takemoto M."/>
            <person name="Kawakami B."/>
            <person name="Yamazaki M."/>
            <person name="Watanabe K."/>
            <person name="Kumagai A."/>
            <person name="Itakura S."/>
            <person name="Fukuzumi Y."/>
            <person name="Fujimori Y."/>
            <person name="Komiyama M."/>
            <person name="Tashiro H."/>
            <person name="Tanigami A."/>
            <person name="Fujiwara T."/>
            <person name="Ono T."/>
            <person name="Yamada K."/>
            <person name="Fujii Y."/>
            <person name="Ozaki K."/>
            <person name="Hirao M."/>
            <person name="Ohmori Y."/>
            <person name="Kawabata A."/>
            <person name="Hikiji T."/>
            <person name="Kobatake N."/>
            <person name="Inagaki H."/>
            <person name="Ikema Y."/>
            <person name="Okamoto S."/>
            <person name="Okitani R."/>
            <person name="Kawakami T."/>
            <person name="Noguchi S."/>
            <person name="Itoh T."/>
            <person name="Shigeta K."/>
            <person name="Senba T."/>
            <person name="Matsumura K."/>
            <person name="Nakajima Y."/>
            <person name="Mizuno T."/>
            <person name="Morinaga M."/>
            <person name="Sasaki M."/>
            <person name="Togashi T."/>
            <person name="Oyama M."/>
            <person name="Hata H."/>
            <person name="Watanabe M."/>
            <person name="Komatsu T."/>
            <person name="Mizushima-Sugano J."/>
            <person name="Satoh T."/>
            <person name="Shirai Y."/>
            <person name="Takahashi Y."/>
            <person name="Nakagawa K."/>
            <person name="Okumura K."/>
            <person name="Nagase T."/>
            <person name="Nomura N."/>
            <person name="Kikuchi H."/>
            <person name="Masuho Y."/>
            <person name="Yamashita R."/>
            <person name="Nakai K."/>
            <person name="Yada T."/>
            <person name="Nakamura Y."/>
            <person name="Ohara O."/>
            <person name="Isogai T."/>
            <person name="Sugano S."/>
        </authorList>
    </citation>
    <scope>NUCLEOTIDE SEQUENCE [LARGE SCALE MRNA] (ISOFORM 6)</scope>
    <scope>NUCLEOTIDE SEQUENCE [LARGE SCALE MRNA] OF 1-402 (ISOFORM 5)</scope>
    <source>
        <tissue>Thymus</tissue>
    </source>
</reference>
<reference key="3">
    <citation type="submission" date="2004-07" db="EMBL/GenBank/DDBJ databases">
        <title>Full-length cDNA libraries and normalization.</title>
        <authorList>
            <person name="Li W.B."/>
            <person name="Gruber C."/>
            <person name="Jessee J."/>
            <person name="Polayes D."/>
        </authorList>
    </citation>
    <scope>NUCLEOTIDE SEQUENCE [LARGE SCALE MRNA] (ISOFORM 4)</scope>
    <source>
        <tissue>Placenta</tissue>
    </source>
</reference>
<reference key="4">
    <citation type="journal article" date="2006" name="Nature">
        <title>The DNA sequence and biological annotation of human chromosome 1.</title>
        <authorList>
            <person name="Gregory S.G."/>
            <person name="Barlow K.F."/>
            <person name="McLay K.E."/>
            <person name="Kaul R."/>
            <person name="Swarbreck D."/>
            <person name="Dunham A."/>
            <person name="Scott C.E."/>
            <person name="Howe K.L."/>
            <person name="Woodfine K."/>
            <person name="Spencer C.C.A."/>
            <person name="Jones M.C."/>
            <person name="Gillson C."/>
            <person name="Searle S."/>
            <person name="Zhou Y."/>
            <person name="Kokocinski F."/>
            <person name="McDonald L."/>
            <person name="Evans R."/>
            <person name="Phillips K."/>
            <person name="Atkinson A."/>
            <person name="Cooper R."/>
            <person name="Jones C."/>
            <person name="Hall R.E."/>
            <person name="Andrews T.D."/>
            <person name="Lloyd C."/>
            <person name="Ainscough R."/>
            <person name="Almeida J.P."/>
            <person name="Ambrose K.D."/>
            <person name="Anderson F."/>
            <person name="Andrew R.W."/>
            <person name="Ashwell R.I.S."/>
            <person name="Aubin K."/>
            <person name="Babbage A.K."/>
            <person name="Bagguley C.L."/>
            <person name="Bailey J."/>
            <person name="Beasley H."/>
            <person name="Bethel G."/>
            <person name="Bird C.P."/>
            <person name="Bray-Allen S."/>
            <person name="Brown J.Y."/>
            <person name="Brown A.J."/>
            <person name="Buckley D."/>
            <person name="Burton J."/>
            <person name="Bye J."/>
            <person name="Carder C."/>
            <person name="Chapman J.C."/>
            <person name="Clark S.Y."/>
            <person name="Clarke G."/>
            <person name="Clee C."/>
            <person name="Cobley V."/>
            <person name="Collier R.E."/>
            <person name="Corby N."/>
            <person name="Coville G.J."/>
            <person name="Davies J."/>
            <person name="Deadman R."/>
            <person name="Dunn M."/>
            <person name="Earthrowl M."/>
            <person name="Ellington A.G."/>
            <person name="Errington H."/>
            <person name="Frankish A."/>
            <person name="Frankland J."/>
            <person name="French L."/>
            <person name="Garner P."/>
            <person name="Garnett J."/>
            <person name="Gay L."/>
            <person name="Ghori M.R.J."/>
            <person name="Gibson R."/>
            <person name="Gilby L.M."/>
            <person name="Gillett W."/>
            <person name="Glithero R.J."/>
            <person name="Grafham D.V."/>
            <person name="Griffiths C."/>
            <person name="Griffiths-Jones S."/>
            <person name="Grocock R."/>
            <person name="Hammond S."/>
            <person name="Harrison E.S.I."/>
            <person name="Hart E."/>
            <person name="Haugen E."/>
            <person name="Heath P.D."/>
            <person name="Holmes S."/>
            <person name="Holt K."/>
            <person name="Howden P.J."/>
            <person name="Hunt A.R."/>
            <person name="Hunt S.E."/>
            <person name="Hunter G."/>
            <person name="Isherwood J."/>
            <person name="James R."/>
            <person name="Johnson C."/>
            <person name="Johnson D."/>
            <person name="Joy A."/>
            <person name="Kay M."/>
            <person name="Kershaw J.K."/>
            <person name="Kibukawa M."/>
            <person name="Kimberley A.M."/>
            <person name="King A."/>
            <person name="Knights A.J."/>
            <person name="Lad H."/>
            <person name="Laird G."/>
            <person name="Lawlor S."/>
            <person name="Leongamornlert D.A."/>
            <person name="Lloyd D.M."/>
            <person name="Loveland J."/>
            <person name="Lovell J."/>
            <person name="Lush M.J."/>
            <person name="Lyne R."/>
            <person name="Martin S."/>
            <person name="Mashreghi-Mohammadi M."/>
            <person name="Matthews L."/>
            <person name="Matthews N.S.W."/>
            <person name="McLaren S."/>
            <person name="Milne S."/>
            <person name="Mistry S."/>
            <person name="Moore M.J.F."/>
            <person name="Nickerson T."/>
            <person name="O'Dell C.N."/>
            <person name="Oliver K."/>
            <person name="Palmeiri A."/>
            <person name="Palmer S.A."/>
            <person name="Parker A."/>
            <person name="Patel D."/>
            <person name="Pearce A.V."/>
            <person name="Peck A.I."/>
            <person name="Pelan S."/>
            <person name="Phelps K."/>
            <person name="Phillimore B.J."/>
            <person name="Plumb R."/>
            <person name="Rajan J."/>
            <person name="Raymond C."/>
            <person name="Rouse G."/>
            <person name="Saenphimmachak C."/>
            <person name="Sehra H.K."/>
            <person name="Sheridan E."/>
            <person name="Shownkeen R."/>
            <person name="Sims S."/>
            <person name="Skuce C.D."/>
            <person name="Smith M."/>
            <person name="Steward C."/>
            <person name="Subramanian S."/>
            <person name="Sycamore N."/>
            <person name="Tracey A."/>
            <person name="Tromans A."/>
            <person name="Van Helmond Z."/>
            <person name="Wall M."/>
            <person name="Wallis J.M."/>
            <person name="White S."/>
            <person name="Whitehead S.L."/>
            <person name="Wilkinson J.E."/>
            <person name="Willey D.L."/>
            <person name="Williams H."/>
            <person name="Wilming L."/>
            <person name="Wray P.W."/>
            <person name="Wu Z."/>
            <person name="Coulson A."/>
            <person name="Vaudin M."/>
            <person name="Sulston J.E."/>
            <person name="Durbin R.M."/>
            <person name="Hubbard T."/>
            <person name="Wooster R."/>
            <person name="Dunham I."/>
            <person name="Carter N.P."/>
            <person name="McVean G."/>
            <person name="Ross M.T."/>
            <person name="Harrow J."/>
            <person name="Olson M.V."/>
            <person name="Beck S."/>
            <person name="Rogers J."/>
            <person name="Bentley D.R."/>
        </authorList>
    </citation>
    <scope>NUCLEOTIDE SEQUENCE [LARGE SCALE GENOMIC DNA]</scope>
</reference>
<reference key="5">
    <citation type="submission" date="2005-09" db="EMBL/GenBank/DDBJ databases">
        <authorList>
            <person name="Mural R.J."/>
            <person name="Istrail S."/>
            <person name="Sutton G.G."/>
            <person name="Florea L."/>
            <person name="Halpern A.L."/>
            <person name="Mobarry C.M."/>
            <person name="Lippert R."/>
            <person name="Walenz B."/>
            <person name="Shatkay H."/>
            <person name="Dew I."/>
            <person name="Miller J.R."/>
            <person name="Flanigan M.J."/>
            <person name="Edwards N.J."/>
            <person name="Bolanos R."/>
            <person name="Fasulo D."/>
            <person name="Halldorsson B.V."/>
            <person name="Hannenhalli S."/>
            <person name="Turner R."/>
            <person name="Yooseph S."/>
            <person name="Lu F."/>
            <person name="Nusskern D.R."/>
            <person name="Shue B.C."/>
            <person name="Zheng X.H."/>
            <person name="Zhong F."/>
            <person name="Delcher A.L."/>
            <person name="Huson D.H."/>
            <person name="Kravitz S.A."/>
            <person name="Mouchard L."/>
            <person name="Reinert K."/>
            <person name="Remington K.A."/>
            <person name="Clark A.G."/>
            <person name="Waterman M.S."/>
            <person name="Eichler E.E."/>
            <person name="Adams M.D."/>
            <person name="Hunkapiller M.W."/>
            <person name="Myers E.W."/>
            <person name="Venter J.C."/>
        </authorList>
    </citation>
    <scope>NUCLEOTIDE SEQUENCE [LARGE SCALE GENOMIC DNA]</scope>
</reference>
<reference key="6">
    <citation type="journal article" date="2004" name="Genome Res.">
        <title>The status, quality, and expansion of the NIH full-length cDNA project: the Mammalian Gene Collection (MGC).</title>
        <authorList>
            <consortium name="The MGC Project Team"/>
        </authorList>
    </citation>
    <scope>NUCLEOTIDE SEQUENCE [LARGE SCALE MRNA] (ISOFORMS 2 AND 3)</scope>
    <scope>VARIANT ARG-350</scope>
    <source>
        <tissue>Brain</tissue>
        <tissue>Pituitary</tissue>
        <tissue>Prostate</tissue>
    </source>
</reference>
<reference key="7">
    <citation type="journal article" date="2007" name="Front. Biosci.">
        <title>Identification of BCAP, a new protein associated with basal bodies and centrioles.</title>
        <authorList>
            <person name="Ponsard C."/>
            <person name="Seltzer V."/>
            <person name="Perret E."/>
            <person name="Tournier F."/>
            <person name="Middendorp S."/>
        </authorList>
    </citation>
    <scope>TISSUE SPECIFICITY</scope>
    <scope>SUBCELLULAR LOCATION</scope>
</reference>
<reference key="8">
    <citation type="journal article" date="2017" name="J. Cell Sci.">
        <title>BCAP is a centriolar satellite protein and inhibitor of ciliogenesis.</title>
        <authorList>
            <person name="de Saram P."/>
            <person name="Iqbal A."/>
            <person name="Murdoch J.N."/>
            <person name="Wilkinson C.J."/>
        </authorList>
    </citation>
    <scope>SUBCELLULAR LOCATION (ISOFORM 1 AND 6)</scope>
    <scope>FUNCTION</scope>
</reference>
<keyword id="KW-0025">Alternative splicing</keyword>
<keyword id="KW-0966">Cell projection</keyword>
<keyword id="KW-0970">Cilium biogenesis/degradation</keyword>
<keyword id="KW-0175">Coiled coil</keyword>
<keyword id="KW-0963">Cytoplasm</keyword>
<keyword id="KW-0206">Cytoskeleton</keyword>
<keyword id="KW-1267">Proteomics identification</keyword>
<keyword id="KW-1185">Reference proteome</keyword>
<sequence length="636" mass="73728">MEKAVNDGSHSEELFCHLKTISEKEDLPRCTSESHLSCLKQDILNEKTELEATLKEAELVTHSVELLLPLFKDTIEKINFENANLSALNLKISEQKEILIKELDTFKSVKLALEHLLRKRDYKQTGDNLSSMLLENLTDNESENTNLKKKVFEKEAHIQELSCLFQSEKANTLKANRFSQSVKVVHERLQIQIHKREAENDKLKEYVKSLETKIAKWNLQSRMNKNEAIVMKEASRQKTVALKKASKVYKQRLDHFTGAIEKLTSQIRDQEAKLSETISASNAWKSHYEKIVIEKTELEVQIETMKKQIINLLEDLKKMEDHGKNSCEEILRKVHSIEYENETLNLENTKLKLRFPCRITESKNMNILIVLDMLCYISSEKTTLAALKDEVVSVENELSELQEVEKKQKTLIEMYKTQVQKLQEAAEIVKSRCENLLHKNNQITKTKNKNVEKMRGQMESHLKELERVCDSLTAAERRLHECQESLQCCKGKCADQEHTIRELQGQVDGNHNLLTKLSLEEENCLIQLKCENLQQKLEQMDAENKELEKKLANQEECLKHSNLKFKEKSAEYTALARQLEAALEEGRQKVAEEIEKMSSRESALQIKILDLETELRKKNEEQNQLVCKMNSDPETP</sequence>
<proteinExistence type="evidence at protein level"/>
<name>ODF2L_HUMAN</name>
<gene>
    <name evidence="10" type="primary">ODF2L</name>
    <name evidence="7" type="synonym">BCAP</name>
    <name type="synonym">KIAA1229</name>
</gene>